<organism>
    <name type="scientific">Mus musculus</name>
    <name type="common">Mouse</name>
    <dbReference type="NCBI Taxonomy" id="10090"/>
    <lineage>
        <taxon>Eukaryota</taxon>
        <taxon>Metazoa</taxon>
        <taxon>Chordata</taxon>
        <taxon>Craniata</taxon>
        <taxon>Vertebrata</taxon>
        <taxon>Euteleostomi</taxon>
        <taxon>Mammalia</taxon>
        <taxon>Eutheria</taxon>
        <taxon>Euarchontoglires</taxon>
        <taxon>Glires</taxon>
        <taxon>Rodentia</taxon>
        <taxon>Myomorpha</taxon>
        <taxon>Muroidea</taxon>
        <taxon>Muridae</taxon>
        <taxon>Murinae</taxon>
        <taxon>Mus</taxon>
        <taxon>Mus</taxon>
    </lineage>
</organism>
<dbReference type="EMBL" id="AK088490">
    <property type="protein sequence ID" value="BAC40386.1"/>
    <property type="molecule type" value="mRNA"/>
</dbReference>
<dbReference type="EMBL" id="AL663090">
    <property type="status" value="NOT_ANNOTATED_CDS"/>
    <property type="molecule type" value="Genomic_DNA"/>
</dbReference>
<dbReference type="EMBL" id="BC003350">
    <property type="protein sequence ID" value="AAH03350.1"/>
    <property type="molecule type" value="mRNA"/>
</dbReference>
<dbReference type="SMR" id="Q99LD4"/>
<dbReference type="CORUM" id="Q99LD4"/>
<dbReference type="FunCoup" id="Q99LD4">
    <property type="interactions" value="3475"/>
</dbReference>
<dbReference type="IntAct" id="Q99LD4">
    <property type="interactions" value="6"/>
</dbReference>
<dbReference type="MINT" id="Q99LD4"/>
<dbReference type="STRING" id="10090.ENSMUSP00000133855"/>
<dbReference type="GlyGen" id="Q99LD4">
    <property type="glycosylation" value="1 site, 1 O-linked glycan (1 site)"/>
</dbReference>
<dbReference type="iPTMnet" id="Q99LD4"/>
<dbReference type="PhosphoSitePlus" id="Q99LD4"/>
<dbReference type="SwissPalm" id="Q99LD4"/>
<dbReference type="jPOST" id="Q99LD4"/>
<dbReference type="PaxDb" id="10090-ENSMUSP00000112007"/>
<dbReference type="PeptideAtlas" id="Q99LD4"/>
<dbReference type="ProteomicsDB" id="285373">
    <molecule id="Q99LD4-1"/>
</dbReference>
<dbReference type="ProteomicsDB" id="285374">
    <molecule id="Q99LD4-2"/>
</dbReference>
<dbReference type="Pumba" id="Q99LD4"/>
<dbReference type="AGR" id="MGI:2384801"/>
<dbReference type="MGI" id="MGI:2384801">
    <property type="gene designation" value="Gps1"/>
</dbReference>
<dbReference type="eggNOG" id="KOG0686">
    <property type="taxonomic scope" value="Eukaryota"/>
</dbReference>
<dbReference type="InParanoid" id="Q99LD4"/>
<dbReference type="Reactome" id="R-MMU-5696394">
    <property type="pathway name" value="DNA Damage Recognition in GG-NER"/>
</dbReference>
<dbReference type="Reactome" id="R-MMU-6781823">
    <property type="pathway name" value="Formation of TC-NER Pre-Incision Complex"/>
</dbReference>
<dbReference type="Reactome" id="R-MMU-8856825">
    <property type="pathway name" value="Cargo recognition for clathrin-mediated endocytosis"/>
</dbReference>
<dbReference type="Reactome" id="R-MMU-8951664">
    <property type="pathway name" value="Neddylation"/>
</dbReference>
<dbReference type="Reactome" id="R-MMU-9013422">
    <property type="pathway name" value="RHOBTB1 GTPase cycle"/>
</dbReference>
<dbReference type="ChiTaRS" id="Gps1">
    <property type="organism name" value="mouse"/>
</dbReference>
<dbReference type="PRO" id="PR:Q99LD4"/>
<dbReference type="Proteomes" id="UP000000589">
    <property type="component" value="Unplaced"/>
</dbReference>
<dbReference type="RNAct" id="Q99LD4">
    <property type="molecule type" value="protein"/>
</dbReference>
<dbReference type="GO" id="GO:0008180">
    <property type="term" value="C:COP9 signalosome"/>
    <property type="evidence" value="ECO:0000314"/>
    <property type="project" value="MGI"/>
</dbReference>
<dbReference type="GO" id="GO:0005737">
    <property type="term" value="C:cytoplasm"/>
    <property type="evidence" value="ECO:0007669"/>
    <property type="project" value="UniProtKB-SubCell"/>
</dbReference>
<dbReference type="FunFam" id="1.25.40.570:FF:000002">
    <property type="entry name" value="COP9 signalosome complex subunit 1"/>
    <property type="match status" value="1"/>
</dbReference>
<dbReference type="Gene3D" id="1.25.40.570">
    <property type="match status" value="1"/>
</dbReference>
<dbReference type="InterPro" id="IPR048624">
    <property type="entry name" value="CSN1_C"/>
</dbReference>
<dbReference type="InterPro" id="IPR000717">
    <property type="entry name" value="PCI_dom"/>
</dbReference>
<dbReference type="InterPro" id="IPR019585">
    <property type="entry name" value="Rpn7/CSN1"/>
</dbReference>
<dbReference type="InterPro" id="IPR045135">
    <property type="entry name" value="Rpn7_N"/>
</dbReference>
<dbReference type="InterPro" id="IPR036390">
    <property type="entry name" value="WH_DNA-bd_sf"/>
</dbReference>
<dbReference type="PANTHER" id="PTHR14145">
    <property type="entry name" value="26S PROTESOME SUBUNIT 6"/>
    <property type="match status" value="1"/>
</dbReference>
<dbReference type="PANTHER" id="PTHR14145:SF2">
    <property type="entry name" value="COP9 SIGNALOSOME COMPLEX SUBUNIT 1"/>
    <property type="match status" value="1"/>
</dbReference>
<dbReference type="Pfam" id="PF21151">
    <property type="entry name" value="CSN1_C"/>
    <property type="match status" value="1"/>
</dbReference>
<dbReference type="Pfam" id="PF01399">
    <property type="entry name" value="PCI"/>
    <property type="match status" value="1"/>
</dbReference>
<dbReference type="Pfam" id="PF10602">
    <property type="entry name" value="RPN7"/>
    <property type="match status" value="1"/>
</dbReference>
<dbReference type="SMART" id="SM00088">
    <property type="entry name" value="PINT"/>
    <property type="match status" value="1"/>
</dbReference>
<dbReference type="SUPFAM" id="SSF46785">
    <property type="entry name" value="Winged helix' DNA-binding domain"/>
    <property type="match status" value="1"/>
</dbReference>
<dbReference type="PROSITE" id="PS50250">
    <property type="entry name" value="PCI"/>
    <property type="match status" value="1"/>
</dbReference>
<evidence type="ECO:0000250" key="1"/>
<evidence type="ECO:0000250" key="2">
    <source>
        <dbReference type="UniProtKB" id="Q13098"/>
    </source>
</evidence>
<evidence type="ECO:0000255" key="3">
    <source>
        <dbReference type="PROSITE-ProRule" id="PRU01185"/>
    </source>
</evidence>
<evidence type="ECO:0000256" key="4">
    <source>
        <dbReference type="SAM" id="MobiDB-lite"/>
    </source>
</evidence>
<evidence type="ECO:0000269" key="5">
    <source>
    </source>
</evidence>
<evidence type="ECO:0000269" key="6">
    <source>
    </source>
</evidence>
<evidence type="ECO:0000269" key="7">
    <source>
    </source>
</evidence>
<evidence type="ECO:0000303" key="8">
    <source>
    </source>
</evidence>
<evidence type="ECO:0000305" key="9"/>
<evidence type="ECO:0007744" key="10">
    <source>
    </source>
</evidence>
<evidence type="ECO:0007744" key="11">
    <source>
    </source>
</evidence>
<evidence type="ECO:0007744" key="12">
    <source>
    </source>
</evidence>
<feature type="chain" id="PRO_0000120960" description="COP9 signalosome complex subunit 1">
    <location>
        <begin position="1"/>
        <end position="471"/>
    </location>
</feature>
<feature type="domain" description="PCI" evidence="3">
    <location>
        <begin position="249"/>
        <end position="411"/>
    </location>
</feature>
<feature type="region of interest" description="Disordered" evidence="4">
    <location>
        <begin position="445"/>
        <end position="471"/>
    </location>
</feature>
<feature type="compositionally biased region" description="Polar residues" evidence="4">
    <location>
        <begin position="456"/>
        <end position="471"/>
    </location>
</feature>
<feature type="modified residue" description="Phosphoserine" evidence="2">
    <location>
        <position position="448"/>
    </location>
</feature>
<feature type="modified residue" description="Phosphoserine" evidence="10 12">
    <location>
        <position position="454"/>
    </location>
</feature>
<feature type="modified residue" description="Phosphothreonine" evidence="10 11 12">
    <location>
        <position position="459"/>
    </location>
</feature>
<feature type="modified residue" description="Phosphoserine" evidence="10 12">
    <location>
        <position position="463"/>
    </location>
</feature>
<feature type="splice variant" id="VSP_011883" description="In isoform 2." evidence="8">
    <original>SPPREGSQGELTPANSQSRMSTNM</original>
    <variation>VKSLGCEGMGGTHTASTEPSLSTAVSS</variation>
    <location>
        <begin position="448"/>
        <end position="471"/>
    </location>
</feature>
<accession>Q99LD4</accession>
<accession>B0QZT1</accession>
<accession>Q8C2J7</accession>
<protein>
    <recommendedName>
        <fullName>COP9 signalosome complex subunit 1</fullName>
        <shortName>SGN1</shortName>
        <shortName>Signalosome subunit 1</shortName>
    </recommendedName>
    <alternativeName>
        <fullName>G protein pathway suppressor 1</fullName>
        <shortName>GPS-1</shortName>
    </alternativeName>
    <alternativeName>
        <fullName>JAB1-containing signalosome subunit 1</fullName>
    </alternativeName>
</protein>
<sequence>MQIDVDPQEDPQNAPDVNYVVENPTLDLEQYAASYSGLMRIERLQFIADRCPPLRVEALKMALSFVQRTFNVDMYEEIHRKLSEATRELQNAPDAIPESGVEPPPLDTAWVEATRKKALLKLEKLDTDLKNYKGNSIKESIRRGHDDLGDHYLDCGDLSNALKCYSRARDYCTSAKHVINMCLNVIKVSVYLQNWSHVLSYVSKAESTPEIAEQRGERDSQTQAILTKLKCAAGLAELAARKYKQAAKCFLLASFDHCDFPELLSPSNVAVYGGLCALATFDRQELQRNVISSSSFKLFLELEPQVRDIIFKFYESKYASCLKMLDEMKDNLLLDMYLAPHVRTLYTQIRNRALIQYFSPYVSADMHKMAAAFNTTVAALEDELTQLILEGLINARIDSHSKILYARDVDQRSTTFEKSLLMGKEFQRRAKAMILRAAVLRNQIHVKSPPREGSQGELTPANSQSRMSTNM</sequence>
<comment type="function">
    <text evidence="1">Essential component of the COP9 signalosome complex (CSN), a complex involved in various cellular and developmental processes. The CSN complex is an essential regulator of the ubiquitin (Ubl) conjugation pathway by mediating the deneddylation of the cullin subunits of SCF-type E3 ligase complexes, leading to decrease the Ubl ligase activity of SCF-type complexes such as SCF, CSA or DDB2. The complex is also involved in phosphorylation of p53/TP53, c-jun/JUN, IkappaBalpha/NFKBIA, ITPK1 and IRF8/ICSBP, possibly via its association with CK2 and PKD kinases. CSN-dependent phosphorylation of TP53 and JUN promotes and protects degradation by the Ubl system, respectively. Suppresses G-protein- and mitogen-activated protein kinase-mediated signal transduction (By similarity).</text>
</comment>
<comment type="subunit">
    <text evidence="2 5 6 7">Component of the CSN complex, composed of COPS1/GPS1, COPS2, COPS3, COPS4, COPS5, COPS6, COPS7 (COPS7A or COPS7B), COPS8 and COPS9 (PubMed:9707402). In the complex, it probably interacts directly with COPS2, COPS3, COPS4 and COPS5 (By similarity). Interacts directly with inositol kinase ITPK1 (By similarity). Interacts with CAPN8 (PubMed:16476741). Interacts with USP48 (By similarity). Interacts with ASB4; this interaction negatively regulates GPS1 (PubMed:17276034).</text>
</comment>
<comment type="subcellular location">
    <subcellularLocation>
        <location evidence="6">Cytoplasm</location>
    </subcellularLocation>
    <subcellularLocation>
        <location evidence="6">Nucleus</location>
    </subcellularLocation>
</comment>
<comment type="alternative products">
    <event type="alternative splicing"/>
    <isoform>
        <id>Q99LD4-1</id>
        <name>1</name>
        <sequence type="displayed"/>
    </isoform>
    <isoform>
        <id>Q99LD4-2</id>
        <name>2</name>
        <sequence type="described" ref="VSP_011883"/>
    </isoform>
</comment>
<comment type="tissue specificity">
    <text evidence="5">Expressed in the base region of the oxyntic and pyloric mucosae.</text>
</comment>
<comment type="domain">
    <text evidence="1 5">The PCI domain is necessary and sufficient for the interactions with other CSN subunits of the complex (By similarity). Mediates the interaction with CAPN8.</text>
</comment>
<comment type="domain">
    <text evidence="1">The N-terminal part (1-196), which is not required for deneddylating activity and CSN complex formation, is nevertheless essential for other aspects of CSN complex function, such as repression of c-fos/FOS expression.</text>
</comment>
<comment type="similarity">
    <text evidence="9">Belongs to the CSN1 family.</text>
</comment>
<proteinExistence type="evidence at protein level"/>
<keyword id="KW-0025">Alternative splicing</keyword>
<keyword id="KW-0963">Cytoplasm</keyword>
<keyword id="KW-0539">Nucleus</keyword>
<keyword id="KW-0597">Phosphoprotein</keyword>
<keyword id="KW-1185">Reference proteome</keyword>
<keyword id="KW-0736">Signalosome</keyword>
<name>CSN1_MOUSE</name>
<gene>
    <name type="primary">Gps1</name>
    <name type="synonym">Cops1</name>
    <name type="synonym">Csn1</name>
</gene>
<reference key="1">
    <citation type="journal article" date="2005" name="Science">
        <title>The transcriptional landscape of the mammalian genome.</title>
        <authorList>
            <person name="Carninci P."/>
            <person name="Kasukawa T."/>
            <person name="Katayama S."/>
            <person name="Gough J."/>
            <person name="Frith M.C."/>
            <person name="Maeda N."/>
            <person name="Oyama R."/>
            <person name="Ravasi T."/>
            <person name="Lenhard B."/>
            <person name="Wells C."/>
            <person name="Kodzius R."/>
            <person name="Shimokawa K."/>
            <person name="Bajic V.B."/>
            <person name="Brenner S.E."/>
            <person name="Batalov S."/>
            <person name="Forrest A.R."/>
            <person name="Zavolan M."/>
            <person name="Davis M.J."/>
            <person name="Wilming L.G."/>
            <person name="Aidinis V."/>
            <person name="Allen J.E."/>
            <person name="Ambesi-Impiombato A."/>
            <person name="Apweiler R."/>
            <person name="Aturaliya R.N."/>
            <person name="Bailey T.L."/>
            <person name="Bansal M."/>
            <person name="Baxter L."/>
            <person name="Beisel K.W."/>
            <person name="Bersano T."/>
            <person name="Bono H."/>
            <person name="Chalk A.M."/>
            <person name="Chiu K.P."/>
            <person name="Choudhary V."/>
            <person name="Christoffels A."/>
            <person name="Clutterbuck D.R."/>
            <person name="Crowe M.L."/>
            <person name="Dalla E."/>
            <person name="Dalrymple B.P."/>
            <person name="de Bono B."/>
            <person name="Della Gatta G."/>
            <person name="di Bernardo D."/>
            <person name="Down T."/>
            <person name="Engstrom P."/>
            <person name="Fagiolini M."/>
            <person name="Faulkner G."/>
            <person name="Fletcher C.F."/>
            <person name="Fukushima T."/>
            <person name="Furuno M."/>
            <person name="Futaki S."/>
            <person name="Gariboldi M."/>
            <person name="Georgii-Hemming P."/>
            <person name="Gingeras T.R."/>
            <person name="Gojobori T."/>
            <person name="Green R.E."/>
            <person name="Gustincich S."/>
            <person name="Harbers M."/>
            <person name="Hayashi Y."/>
            <person name="Hensch T.K."/>
            <person name="Hirokawa N."/>
            <person name="Hill D."/>
            <person name="Huminiecki L."/>
            <person name="Iacono M."/>
            <person name="Ikeo K."/>
            <person name="Iwama A."/>
            <person name="Ishikawa T."/>
            <person name="Jakt M."/>
            <person name="Kanapin A."/>
            <person name="Katoh M."/>
            <person name="Kawasawa Y."/>
            <person name="Kelso J."/>
            <person name="Kitamura H."/>
            <person name="Kitano H."/>
            <person name="Kollias G."/>
            <person name="Krishnan S.P."/>
            <person name="Kruger A."/>
            <person name="Kummerfeld S.K."/>
            <person name="Kurochkin I.V."/>
            <person name="Lareau L.F."/>
            <person name="Lazarevic D."/>
            <person name="Lipovich L."/>
            <person name="Liu J."/>
            <person name="Liuni S."/>
            <person name="McWilliam S."/>
            <person name="Madan Babu M."/>
            <person name="Madera M."/>
            <person name="Marchionni L."/>
            <person name="Matsuda H."/>
            <person name="Matsuzawa S."/>
            <person name="Miki H."/>
            <person name="Mignone F."/>
            <person name="Miyake S."/>
            <person name="Morris K."/>
            <person name="Mottagui-Tabar S."/>
            <person name="Mulder N."/>
            <person name="Nakano N."/>
            <person name="Nakauchi H."/>
            <person name="Ng P."/>
            <person name="Nilsson R."/>
            <person name="Nishiguchi S."/>
            <person name="Nishikawa S."/>
            <person name="Nori F."/>
            <person name="Ohara O."/>
            <person name="Okazaki Y."/>
            <person name="Orlando V."/>
            <person name="Pang K.C."/>
            <person name="Pavan W.J."/>
            <person name="Pavesi G."/>
            <person name="Pesole G."/>
            <person name="Petrovsky N."/>
            <person name="Piazza S."/>
            <person name="Reed J."/>
            <person name="Reid J.F."/>
            <person name="Ring B.Z."/>
            <person name="Ringwald M."/>
            <person name="Rost B."/>
            <person name="Ruan Y."/>
            <person name="Salzberg S.L."/>
            <person name="Sandelin A."/>
            <person name="Schneider C."/>
            <person name="Schoenbach C."/>
            <person name="Sekiguchi K."/>
            <person name="Semple C.A."/>
            <person name="Seno S."/>
            <person name="Sessa L."/>
            <person name="Sheng Y."/>
            <person name="Shibata Y."/>
            <person name="Shimada H."/>
            <person name="Shimada K."/>
            <person name="Silva D."/>
            <person name="Sinclair B."/>
            <person name="Sperling S."/>
            <person name="Stupka E."/>
            <person name="Sugiura K."/>
            <person name="Sultana R."/>
            <person name="Takenaka Y."/>
            <person name="Taki K."/>
            <person name="Tammoja K."/>
            <person name="Tan S.L."/>
            <person name="Tang S."/>
            <person name="Taylor M.S."/>
            <person name="Tegner J."/>
            <person name="Teichmann S.A."/>
            <person name="Ueda H.R."/>
            <person name="van Nimwegen E."/>
            <person name="Verardo R."/>
            <person name="Wei C.L."/>
            <person name="Yagi K."/>
            <person name="Yamanishi H."/>
            <person name="Zabarovsky E."/>
            <person name="Zhu S."/>
            <person name="Zimmer A."/>
            <person name="Hide W."/>
            <person name="Bult C."/>
            <person name="Grimmond S.M."/>
            <person name="Teasdale R.D."/>
            <person name="Liu E.T."/>
            <person name="Brusic V."/>
            <person name="Quackenbush J."/>
            <person name="Wahlestedt C."/>
            <person name="Mattick J.S."/>
            <person name="Hume D.A."/>
            <person name="Kai C."/>
            <person name="Sasaki D."/>
            <person name="Tomaru Y."/>
            <person name="Fukuda S."/>
            <person name="Kanamori-Katayama M."/>
            <person name="Suzuki M."/>
            <person name="Aoki J."/>
            <person name="Arakawa T."/>
            <person name="Iida J."/>
            <person name="Imamura K."/>
            <person name="Itoh M."/>
            <person name="Kato T."/>
            <person name="Kawaji H."/>
            <person name="Kawagashira N."/>
            <person name="Kawashima T."/>
            <person name="Kojima M."/>
            <person name="Kondo S."/>
            <person name="Konno H."/>
            <person name="Nakano K."/>
            <person name="Ninomiya N."/>
            <person name="Nishio T."/>
            <person name="Okada M."/>
            <person name="Plessy C."/>
            <person name="Shibata K."/>
            <person name="Shiraki T."/>
            <person name="Suzuki S."/>
            <person name="Tagami M."/>
            <person name="Waki K."/>
            <person name="Watahiki A."/>
            <person name="Okamura-Oho Y."/>
            <person name="Suzuki H."/>
            <person name="Kawai J."/>
            <person name="Hayashizaki Y."/>
        </authorList>
    </citation>
    <scope>NUCLEOTIDE SEQUENCE [LARGE SCALE MRNA] (ISOFORM 2)</scope>
    <source>
        <strain>NOD</strain>
        <tissue>Thymus</tissue>
    </source>
</reference>
<reference key="2">
    <citation type="journal article" date="2009" name="PLoS Biol.">
        <title>Lineage-specific biology revealed by a finished genome assembly of the mouse.</title>
        <authorList>
            <person name="Church D.M."/>
            <person name="Goodstadt L."/>
            <person name="Hillier L.W."/>
            <person name="Zody M.C."/>
            <person name="Goldstein S."/>
            <person name="She X."/>
            <person name="Bult C.J."/>
            <person name="Agarwala R."/>
            <person name="Cherry J.L."/>
            <person name="DiCuccio M."/>
            <person name="Hlavina W."/>
            <person name="Kapustin Y."/>
            <person name="Meric P."/>
            <person name="Maglott D."/>
            <person name="Birtle Z."/>
            <person name="Marques A.C."/>
            <person name="Graves T."/>
            <person name="Zhou S."/>
            <person name="Teague B."/>
            <person name="Potamousis K."/>
            <person name="Churas C."/>
            <person name="Place M."/>
            <person name="Herschleb J."/>
            <person name="Runnheim R."/>
            <person name="Forrest D."/>
            <person name="Amos-Landgraf J."/>
            <person name="Schwartz D.C."/>
            <person name="Cheng Z."/>
            <person name="Lindblad-Toh K."/>
            <person name="Eichler E.E."/>
            <person name="Ponting C.P."/>
        </authorList>
    </citation>
    <scope>NUCLEOTIDE SEQUENCE [LARGE SCALE GENOMIC DNA]</scope>
    <source>
        <strain>C57BL/6J</strain>
    </source>
</reference>
<reference key="3">
    <citation type="journal article" date="2004" name="Genome Res.">
        <title>The status, quality, and expansion of the NIH full-length cDNA project: the Mammalian Gene Collection (MGC).</title>
        <authorList>
            <consortium name="The MGC Project Team"/>
        </authorList>
    </citation>
    <scope>NUCLEOTIDE SEQUENCE [LARGE SCALE MRNA] (ISOFORM 1)</scope>
    <source>
        <tissue>Mammary tumor</tissue>
    </source>
</reference>
<reference key="4">
    <citation type="journal article" date="1998" name="Curr. Biol.">
        <title>The COP9 complex is conserved between plants and mammals and is related to the 26S proteasome regulatory complex.</title>
        <authorList>
            <person name="Wei N."/>
            <person name="Tsuge T."/>
            <person name="Serino G."/>
            <person name="Dohmae N."/>
            <person name="Takio K."/>
            <person name="Matsui M."/>
            <person name="Deng X.-W."/>
        </authorList>
    </citation>
    <scope>IDENTIFICATION IN THE CSN COMPLEX</scope>
    <source>
        <strain>C57BL/6J</strain>
    </source>
</reference>
<reference key="5">
    <citation type="journal article" date="2006" name="J. Biol. Chem.">
        <title>Stomach-specific calpain, nCL-2, localizes in mucus cells and proteolyzes the beta-subunit of coatomer complex, beta-COP.</title>
        <authorList>
            <person name="Hata S."/>
            <person name="Koyama S."/>
            <person name="Kawahara H."/>
            <person name="Doi N."/>
            <person name="Maeda T."/>
            <person name="Toyama-Sorimachi N."/>
            <person name="Abe K."/>
            <person name="Suzuki K."/>
            <person name="Sorimachi H."/>
        </authorList>
    </citation>
    <scope>INTERACTION WITH CAPN8</scope>
    <scope>DOMAIN</scope>
    <scope>TISSUE SPECIFICITY</scope>
</reference>
<reference key="6">
    <citation type="journal article" date="2007" name="Proc. Natl. Acad. Sci. U.S.A.">
        <title>Large-scale phosphorylation analysis of mouse liver.</title>
        <authorList>
            <person name="Villen J."/>
            <person name="Beausoleil S.A."/>
            <person name="Gerber S.A."/>
            <person name="Gygi S.P."/>
        </authorList>
    </citation>
    <scope>PHOSPHORYLATION [LARGE SCALE ANALYSIS] AT SER-454; THR-459 AND SER-463</scope>
    <scope>IDENTIFICATION BY MASS SPECTROMETRY [LARGE SCALE ANALYSIS]</scope>
    <source>
        <tissue>Liver</tissue>
    </source>
</reference>
<reference key="7">
    <citation type="journal article" date="2007" name="Science">
        <title>ATM and ATR substrate analysis reveals extensive protein networks responsive to DNA damage.</title>
        <authorList>
            <person name="Matsuoka S."/>
            <person name="Ballif B.A."/>
            <person name="Smogorzewska A."/>
            <person name="McDonald E.R. III"/>
            <person name="Hurov K.E."/>
            <person name="Luo J."/>
            <person name="Bakalarski C.E."/>
            <person name="Zhao Z."/>
            <person name="Solimini N."/>
            <person name="Lerenthal Y."/>
            <person name="Shiloh Y."/>
            <person name="Gygi S.P."/>
            <person name="Elledge S.J."/>
        </authorList>
    </citation>
    <scope>PHOSPHORYLATION [LARGE SCALE ANALYSIS] AT THR-459</scope>
    <scope>IDENTIFICATION BY MASS SPECTROMETRY [LARGE SCALE ANALYSIS]</scope>
    <source>
        <tissue>Embryonic fibroblast</tissue>
    </source>
</reference>
<reference key="8">
    <citation type="journal article" date="2007" name="Cell. Signal.">
        <title>Ankyrin repeat and SOCS box containing protein 4 (Asb-4) interacts with GPS1 (CSN1) and inhibits c-Jun NH2-terminal kinase activity.</title>
        <authorList>
            <person name="Li J.Y."/>
            <person name="Chai B.X."/>
            <person name="Zhang W."/>
            <person name="Liu Y.Q."/>
            <person name="Ammori J.B."/>
            <person name="Mulholland M.W."/>
        </authorList>
    </citation>
    <scope>INTERACTION WITH ASB4</scope>
    <scope>SUBCELLULAR LOCATION</scope>
</reference>
<reference key="9">
    <citation type="journal article" date="2010" name="Cell">
        <title>A tissue-specific atlas of mouse protein phosphorylation and expression.</title>
        <authorList>
            <person name="Huttlin E.L."/>
            <person name="Jedrychowski M.P."/>
            <person name="Elias J.E."/>
            <person name="Goswami T."/>
            <person name="Rad R."/>
            <person name="Beausoleil S.A."/>
            <person name="Villen J."/>
            <person name="Haas W."/>
            <person name="Sowa M.E."/>
            <person name="Gygi S.P."/>
        </authorList>
    </citation>
    <scope>PHOSPHORYLATION [LARGE SCALE ANALYSIS] AT SER-454; THR-459 AND SER-463</scope>
    <scope>IDENTIFICATION BY MASS SPECTROMETRY [LARGE SCALE ANALYSIS]</scope>
    <source>
        <tissue>Brain</tissue>
        <tissue>Brown adipose tissue</tissue>
        <tissue>Heart</tissue>
        <tissue>Kidney</tissue>
        <tissue>Liver</tissue>
        <tissue>Lung</tissue>
        <tissue>Pancreas</tissue>
        <tissue>Spleen</tissue>
        <tissue>Testis</tissue>
    </source>
</reference>